<keyword id="KW-0030">Aminoacyl-tRNA synthetase</keyword>
<keyword id="KW-0067">ATP-binding</keyword>
<keyword id="KW-0963">Cytoplasm</keyword>
<keyword id="KW-0436">Ligase</keyword>
<keyword id="KW-0547">Nucleotide-binding</keyword>
<keyword id="KW-0648">Protein biosynthesis</keyword>
<reference key="1">
    <citation type="journal article" date="2005" name="J. Bacteriol.">
        <title>Insights into genome plasticity and pathogenicity of the plant pathogenic Bacterium Xanthomonas campestris pv. vesicatoria revealed by the complete genome sequence.</title>
        <authorList>
            <person name="Thieme F."/>
            <person name="Koebnik R."/>
            <person name="Bekel T."/>
            <person name="Berger C."/>
            <person name="Boch J."/>
            <person name="Buettner D."/>
            <person name="Caldana C."/>
            <person name="Gaigalat L."/>
            <person name="Goesmann A."/>
            <person name="Kay S."/>
            <person name="Kirchner O."/>
            <person name="Lanz C."/>
            <person name="Linke B."/>
            <person name="McHardy A.C."/>
            <person name="Meyer F."/>
            <person name="Mittenhuber G."/>
            <person name="Nies D.H."/>
            <person name="Niesbach-Kloesgen U."/>
            <person name="Patschkowski T."/>
            <person name="Rueckert C."/>
            <person name="Rupp O."/>
            <person name="Schneiker S."/>
            <person name="Schuster S.C."/>
            <person name="Vorhoelter F.J."/>
            <person name="Weber E."/>
            <person name="Puehler A."/>
            <person name="Bonas U."/>
            <person name="Bartels D."/>
            <person name="Kaiser O."/>
        </authorList>
    </citation>
    <scope>NUCLEOTIDE SEQUENCE [LARGE SCALE GENOMIC DNA]</scope>
    <source>
        <strain>85-10</strain>
    </source>
</reference>
<organism>
    <name type="scientific">Xanthomonas euvesicatoria pv. vesicatoria (strain 85-10)</name>
    <name type="common">Xanthomonas campestris pv. vesicatoria</name>
    <dbReference type="NCBI Taxonomy" id="316273"/>
    <lineage>
        <taxon>Bacteria</taxon>
        <taxon>Pseudomonadati</taxon>
        <taxon>Pseudomonadota</taxon>
        <taxon>Gammaproteobacteria</taxon>
        <taxon>Lysobacterales</taxon>
        <taxon>Lysobacteraceae</taxon>
        <taxon>Xanthomonas</taxon>
    </lineage>
</organism>
<dbReference type="EC" id="6.1.1.4" evidence="1"/>
<dbReference type="EMBL" id="AM039952">
    <property type="protein sequence ID" value="CAJ24617.1"/>
    <property type="status" value="ALT_INIT"/>
    <property type="molecule type" value="Genomic_DNA"/>
</dbReference>
<dbReference type="RefSeq" id="WP_041855068.1">
    <property type="nucleotide sequence ID" value="NZ_CP017190.1"/>
</dbReference>
<dbReference type="SMR" id="Q3BRE4"/>
<dbReference type="STRING" id="456327.BJD11_08170"/>
<dbReference type="KEGG" id="xcv:XCV2938"/>
<dbReference type="eggNOG" id="COG0495">
    <property type="taxonomic scope" value="Bacteria"/>
</dbReference>
<dbReference type="HOGENOM" id="CLU_004427_0_0_6"/>
<dbReference type="Proteomes" id="UP000007069">
    <property type="component" value="Chromosome"/>
</dbReference>
<dbReference type="GO" id="GO:0005829">
    <property type="term" value="C:cytosol"/>
    <property type="evidence" value="ECO:0007669"/>
    <property type="project" value="TreeGrafter"/>
</dbReference>
<dbReference type="GO" id="GO:0002161">
    <property type="term" value="F:aminoacyl-tRNA deacylase activity"/>
    <property type="evidence" value="ECO:0007669"/>
    <property type="project" value="InterPro"/>
</dbReference>
<dbReference type="GO" id="GO:0005524">
    <property type="term" value="F:ATP binding"/>
    <property type="evidence" value="ECO:0007669"/>
    <property type="project" value="UniProtKB-UniRule"/>
</dbReference>
<dbReference type="GO" id="GO:0004823">
    <property type="term" value="F:leucine-tRNA ligase activity"/>
    <property type="evidence" value="ECO:0007669"/>
    <property type="project" value="UniProtKB-UniRule"/>
</dbReference>
<dbReference type="GO" id="GO:0006429">
    <property type="term" value="P:leucyl-tRNA aminoacylation"/>
    <property type="evidence" value="ECO:0007669"/>
    <property type="project" value="UniProtKB-UniRule"/>
</dbReference>
<dbReference type="CDD" id="cd07958">
    <property type="entry name" value="Anticodon_Ia_Leu_BEm"/>
    <property type="match status" value="1"/>
</dbReference>
<dbReference type="CDD" id="cd00812">
    <property type="entry name" value="LeuRS_core"/>
    <property type="match status" value="1"/>
</dbReference>
<dbReference type="FunFam" id="1.10.730.10:FF:000003">
    <property type="entry name" value="Leucine--tRNA ligase"/>
    <property type="match status" value="1"/>
</dbReference>
<dbReference type="FunFam" id="2.20.28.290:FF:000001">
    <property type="entry name" value="Leucine--tRNA ligase"/>
    <property type="match status" value="1"/>
</dbReference>
<dbReference type="FunFam" id="3.10.20.590:FF:000001">
    <property type="entry name" value="Leucine--tRNA ligase"/>
    <property type="match status" value="1"/>
</dbReference>
<dbReference type="FunFam" id="3.40.50.620:FF:000003">
    <property type="entry name" value="Leucine--tRNA ligase"/>
    <property type="match status" value="1"/>
</dbReference>
<dbReference type="FunFam" id="3.40.50.620:FF:000124">
    <property type="entry name" value="Leucine--tRNA ligase"/>
    <property type="match status" value="1"/>
</dbReference>
<dbReference type="FunFam" id="3.90.740.10:FF:000012">
    <property type="entry name" value="Leucine--tRNA ligase"/>
    <property type="match status" value="1"/>
</dbReference>
<dbReference type="Gene3D" id="2.20.28.290">
    <property type="match status" value="1"/>
</dbReference>
<dbReference type="Gene3D" id="3.10.20.590">
    <property type="match status" value="1"/>
</dbReference>
<dbReference type="Gene3D" id="3.40.50.620">
    <property type="entry name" value="HUPs"/>
    <property type="match status" value="2"/>
</dbReference>
<dbReference type="Gene3D" id="1.10.730.10">
    <property type="entry name" value="Isoleucyl-tRNA Synthetase, Domain 1"/>
    <property type="match status" value="2"/>
</dbReference>
<dbReference type="Gene3D" id="3.90.740.10">
    <property type="entry name" value="Valyl/Leucyl/Isoleucyl-tRNA synthetase, editing domain"/>
    <property type="match status" value="1"/>
</dbReference>
<dbReference type="HAMAP" id="MF_00049_B">
    <property type="entry name" value="Leu_tRNA_synth_B"/>
    <property type="match status" value="1"/>
</dbReference>
<dbReference type="InterPro" id="IPR001412">
    <property type="entry name" value="aa-tRNA-synth_I_CS"/>
</dbReference>
<dbReference type="InterPro" id="IPR002300">
    <property type="entry name" value="aa-tRNA-synth_Ia"/>
</dbReference>
<dbReference type="InterPro" id="IPR002302">
    <property type="entry name" value="Leu-tRNA-ligase"/>
</dbReference>
<dbReference type="InterPro" id="IPR025709">
    <property type="entry name" value="Leu_tRNA-synth_edit"/>
</dbReference>
<dbReference type="InterPro" id="IPR013155">
    <property type="entry name" value="M/V/L/I-tRNA-synth_anticd-bd"/>
</dbReference>
<dbReference type="InterPro" id="IPR015413">
    <property type="entry name" value="Methionyl/Leucyl_tRNA_Synth"/>
</dbReference>
<dbReference type="InterPro" id="IPR014729">
    <property type="entry name" value="Rossmann-like_a/b/a_fold"/>
</dbReference>
<dbReference type="InterPro" id="IPR009080">
    <property type="entry name" value="tRNAsynth_Ia_anticodon-bd"/>
</dbReference>
<dbReference type="InterPro" id="IPR009008">
    <property type="entry name" value="Val/Leu/Ile-tRNA-synth_edit"/>
</dbReference>
<dbReference type="NCBIfam" id="TIGR00396">
    <property type="entry name" value="leuS_bact"/>
    <property type="match status" value="1"/>
</dbReference>
<dbReference type="PANTHER" id="PTHR43740:SF2">
    <property type="entry name" value="LEUCINE--TRNA LIGASE, MITOCHONDRIAL"/>
    <property type="match status" value="1"/>
</dbReference>
<dbReference type="PANTHER" id="PTHR43740">
    <property type="entry name" value="LEUCYL-TRNA SYNTHETASE"/>
    <property type="match status" value="1"/>
</dbReference>
<dbReference type="Pfam" id="PF08264">
    <property type="entry name" value="Anticodon_1"/>
    <property type="match status" value="1"/>
</dbReference>
<dbReference type="Pfam" id="PF00133">
    <property type="entry name" value="tRNA-synt_1"/>
    <property type="match status" value="2"/>
</dbReference>
<dbReference type="Pfam" id="PF13603">
    <property type="entry name" value="tRNA-synt_1_2"/>
    <property type="match status" value="1"/>
</dbReference>
<dbReference type="Pfam" id="PF09334">
    <property type="entry name" value="tRNA-synt_1g"/>
    <property type="match status" value="1"/>
</dbReference>
<dbReference type="PRINTS" id="PR00985">
    <property type="entry name" value="TRNASYNTHLEU"/>
</dbReference>
<dbReference type="SUPFAM" id="SSF47323">
    <property type="entry name" value="Anticodon-binding domain of a subclass of class I aminoacyl-tRNA synthetases"/>
    <property type="match status" value="1"/>
</dbReference>
<dbReference type="SUPFAM" id="SSF52374">
    <property type="entry name" value="Nucleotidylyl transferase"/>
    <property type="match status" value="1"/>
</dbReference>
<dbReference type="SUPFAM" id="SSF50677">
    <property type="entry name" value="ValRS/IleRS/LeuRS editing domain"/>
    <property type="match status" value="1"/>
</dbReference>
<dbReference type="PROSITE" id="PS00178">
    <property type="entry name" value="AA_TRNA_LIGASE_I"/>
    <property type="match status" value="1"/>
</dbReference>
<comment type="catalytic activity">
    <reaction evidence="1">
        <text>tRNA(Leu) + L-leucine + ATP = L-leucyl-tRNA(Leu) + AMP + diphosphate</text>
        <dbReference type="Rhea" id="RHEA:11688"/>
        <dbReference type="Rhea" id="RHEA-COMP:9613"/>
        <dbReference type="Rhea" id="RHEA-COMP:9622"/>
        <dbReference type="ChEBI" id="CHEBI:30616"/>
        <dbReference type="ChEBI" id="CHEBI:33019"/>
        <dbReference type="ChEBI" id="CHEBI:57427"/>
        <dbReference type="ChEBI" id="CHEBI:78442"/>
        <dbReference type="ChEBI" id="CHEBI:78494"/>
        <dbReference type="ChEBI" id="CHEBI:456215"/>
        <dbReference type="EC" id="6.1.1.4"/>
    </reaction>
</comment>
<comment type="subcellular location">
    <subcellularLocation>
        <location evidence="1">Cytoplasm</location>
    </subcellularLocation>
</comment>
<comment type="similarity">
    <text evidence="1">Belongs to the class-I aminoacyl-tRNA synthetase family.</text>
</comment>
<comment type="sequence caution" evidence="2">
    <conflict type="erroneous initiation">
        <sequence resource="EMBL-CDS" id="CAJ24617"/>
    </conflict>
</comment>
<proteinExistence type="inferred from homology"/>
<evidence type="ECO:0000255" key="1">
    <source>
        <dbReference type="HAMAP-Rule" id="MF_00049"/>
    </source>
</evidence>
<evidence type="ECO:0000305" key="2"/>
<name>SYL_XANE5</name>
<feature type="chain" id="PRO_0000334839" description="Leucine--tRNA ligase">
    <location>
        <begin position="1"/>
        <end position="880"/>
    </location>
</feature>
<feature type="short sequence motif" description="'HIGH' region">
    <location>
        <begin position="46"/>
        <end position="56"/>
    </location>
</feature>
<feature type="short sequence motif" description="'KMSKS' region">
    <location>
        <begin position="638"/>
        <end position="642"/>
    </location>
</feature>
<feature type="binding site" evidence="1">
    <location>
        <position position="641"/>
    </location>
    <ligand>
        <name>ATP</name>
        <dbReference type="ChEBI" id="CHEBI:30616"/>
    </ligand>
</feature>
<protein>
    <recommendedName>
        <fullName evidence="1">Leucine--tRNA ligase</fullName>
        <ecNumber evidence="1">6.1.1.4</ecNumber>
    </recommendedName>
    <alternativeName>
        <fullName evidence="1">Leucyl-tRNA synthetase</fullName>
        <shortName evidence="1">LeuRS</shortName>
    </alternativeName>
</protein>
<gene>
    <name evidence="1" type="primary">leuS</name>
    <name type="ordered locus">XCV2938</name>
</gene>
<accession>Q3BRE4</accession>
<sequence length="880" mass="98598">MSTVEPNVYDPQQVETSAQQFWDATRAFQVDENSEKPKFYCLSMLPYPSGALHMGHVRNYTISDVVSRYKRMTGHNVLQPMGWDAFGLPAENAAIKNKTAPAKWTYANIEHMRAQLKSLGYAIDWSREFATCTPDYYVHEQRMFTRLMRKGLAYRRNAVVNWDPIDQTVLANEQVIDGRGWRSGALVEKREIPQWFLRITDYAQELLDGLDQLDGWPDSVKTMQRNWIGRSEGLEIQFDVRDIDGAPLDPLRVFTTRPDTLMGVTFVSIAAEHPLALHAAKSNPELAALLETLKHGGVSEAELETQEKRGMATGLTAVHPISGEQVPVWVANFVLMGYGTGAVMAVPGHDQRDFEFANKYGLPIVQVVKLREPRNEEEQTWDATHWRDWYTDKSRELELINSAEFDGLDFGGAFEALAERFERKGQGQRRVNYRLRDWGVSRQRYWGCPIPVIYCAKCGAVPVPEDQLPVVLPENVEFSGTGSPIKTDPTWRQTTCPDCGGPAERETDTFDTFMESSWYVARYTSPNARDMVDRRANYWMPADLYVGGIEHAILHLMYFRFYHKLMRDARLVDSDEPVTNLLTQGMVIAETFYRDADNGGKDWINPADVEIQRDERGRVTGAVLIADGQPVHIGGTEKMSKSKNNGVDPQSMVAKYGADTVRLFSMFAAPPEQSLEWNEAGVDGMARFMRRLWVQVHKHVGEGAAVALDVAVLSAEQKAIRRKTHETIGKVSDDYGRRHSFNTAIAAVMELSNALAKFDDASEQGRAVRQEALEAMVLLLNPITPHASHALWQVLGRGETLLENVAFPQADASALVRDALTLAVQINGKLRGTIDVAADATREQIEALAQAEPNAAKFLEGLSVRKIIIVPGKIVNIVAG</sequence>